<evidence type="ECO:0000255" key="1">
    <source>
        <dbReference type="HAMAP-Rule" id="MF_00137"/>
    </source>
</evidence>
<protein>
    <recommendedName>
        <fullName evidence="1">Phosphoribosylaminoimidazole-succinocarboxamide synthase</fullName>
        <ecNumber evidence="1">6.3.2.6</ecNumber>
    </recommendedName>
    <alternativeName>
        <fullName evidence="1">SAICAR synthetase</fullName>
    </alternativeName>
</protein>
<keyword id="KW-0067">ATP-binding</keyword>
<keyword id="KW-0436">Ligase</keyword>
<keyword id="KW-0547">Nucleotide-binding</keyword>
<keyword id="KW-0658">Purine biosynthesis</keyword>
<keyword id="KW-1185">Reference proteome</keyword>
<organism>
    <name type="scientific">Corynebacterium diphtheriae (strain ATCC 700971 / NCTC 13129 / Biotype gravis)</name>
    <dbReference type="NCBI Taxonomy" id="257309"/>
    <lineage>
        <taxon>Bacteria</taxon>
        <taxon>Bacillati</taxon>
        <taxon>Actinomycetota</taxon>
        <taxon>Actinomycetes</taxon>
        <taxon>Mycobacteriales</taxon>
        <taxon>Corynebacteriaceae</taxon>
        <taxon>Corynebacterium</taxon>
    </lineage>
</organism>
<dbReference type="EC" id="6.3.2.6" evidence="1"/>
<dbReference type="EMBL" id="BX248359">
    <property type="protein sequence ID" value="CAE50461.1"/>
    <property type="molecule type" value="Genomic_DNA"/>
</dbReference>
<dbReference type="RefSeq" id="WP_003852815.1">
    <property type="nucleotide sequence ID" value="NC_002935.2"/>
</dbReference>
<dbReference type="SMR" id="Q6NFG4"/>
<dbReference type="STRING" id="257309.DIP1927"/>
<dbReference type="KEGG" id="cdi:DIP1927"/>
<dbReference type="HOGENOM" id="CLU_045637_0_0_11"/>
<dbReference type="UniPathway" id="UPA00074">
    <property type="reaction ID" value="UER00131"/>
</dbReference>
<dbReference type="Proteomes" id="UP000002198">
    <property type="component" value="Chromosome"/>
</dbReference>
<dbReference type="GO" id="GO:0005737">
    <property type="term" value="C:cytoplasm"/>
    <property type="evidence" value="ECO:0007669"/>
    <property type="project" value="TreeGrafter"/>
</dbReference>
<dbReference type="GO" id="GO:0005524">
    <property type="term" value="F:ATP binding"/>
    <property type="evidence" value="ECO:0007669"/>
    <property type="project" value="UniProtKB-KW"/>
</dbReference>
<dbReference type="GO" id="GO:0004639">
    <property type="term" value="F:phosphoribosylaminoimidazolesuccinocarboxamide synthase activity"/>
    <property type="evidence" value="ECO:0007669"/>
    <property type="project" value="UniProtKB-UniRule"/>
</dbReference>
<dbReference type="GO" id="GO:0006189">
    <property type="term" value="P:'de novo' IMP biosynthetic process"/>
    <property type="evidence" value="ECO:0007669"/>
    <property type="project" value="UniProtKB-UniRule"/>
</dbReference>
<dbReference type="CDD" id="cd01414">
    <property type="entry name" value="SAICAR_synt_Sc"/>
    <property type="match status" value="1"/>
</dbReference>
<dbReference type="FunFam" id="3.30.470.20:FF:000015">
    <property type="entry name" value="Phosphoribosylaminoimidazole-succinocarboxamide synthase"/>
    <property type="match status" value="1"/>
</dbReference>
<dbReference type="Gene3D" id="3.30.470.20">
    <property type="entry name" value="ATP-grasp fold, B domain"/>
    <property type="match status" value="1"/>
</dbReference>
<dbReference type="Gene3D" id="3.30.200.20">
    <property type="entry name" value="Phosphorylase Kinase, domain 1"/>
    <property type="match status" value="1"/>
</dbReference>
<dbReference type="HAMAP" id="MF_00137">
    <property type="entry name" value="SAICAR_synth"/>
    <property type="match status" value="1"/>
</dbReference>
<dbReference type="InterPro" id="IPR028923">
    <property type="entry name" value="SAICAR_synt/ADE2_N"/>
</dbReference>
<dbReference type="InterPro" id="IPR001636">
    <property type="entry name" value="SAICAR_synth"/>
</dbReference>
<dbReference type="InterPro" id="IPR018236">
    <property type="entry name" value="SAICAR_synthetase_CS"/>
</dbReference>
<dbReference type="NCBIfam" id="NF010568">
    <property type="entry name" value="PRK13961.1"/>
    <property type="match status" value="1"/>
</dbReference>
<dbReference type="NCBIfam" id="TIGR00081">
    <property type="entry name" value="purC"/>
    <property type="match status" value="1"/>
</dbReference>
<dbReference type="PANTHER" id="PTHR43700">
    <property type="entry name" value="PHOSPHORIBOSYLAMINOIMIDAZOLE-SUCCINOCARBOXAMIDE SYNTHASE"/>
    <property type="match status" value="1"/>
</dbReference>
<dbReference type="PANTHER" id="PTHR43700:SF1">
    <property type="entry name" value="PHOSPHORIBOSYLAMINOIMIDAZOLE-SUCCINOCARBOXAMIDE SYNTHASE"/>
    <property type="match status" value="1"/>
</dbReference>
<dbReference type="Pfam" id="PF01259">
    <property type="entry name" value="SAICAR_synt"/>
    <property type="match status" value="1"/>
</dbReference>
<dbReference type="SUPFAM" id="SSF56104">
    <property type="entry name" value="SAICAR synthase-like"/>
    <property type="match status" value="1"/>
</dbReference>
<dbReference type="PROSITE" id="PS01057">
    <property type="entry name" value="SAICAR_SYNTHETASE_1"/>
    <property type="match status" value="1"/>
</dbReference>
<dbReference type="PROSITE" id="PS01058">
    <property type="entry name" value="SAICAR_SYNTHETASE_2"/>
    <property type="match status" value="1"/>
</dbReference>
<name>PUR7_CORDI</name>
<reference key="1">
    <citation type="journal article" date="2003" name="Nucleic Acids Res.">
        <title>The complete genome sequence and analysis of Corynebacterium diphtheriae NCTC13129.</title>
        <authorList>
            <person name="Cerdeno-Tarraga A.-M."/>
            <person name="Efstratiou A."/>
            <person name="Dover L.G."/>
            <person name="Holden M.T.G."/>
            <person name="Pallen M.J."/>
            <person name="Bentley S.D."/>
            <person name="Besra G.S."/>
            <person name="Churcher C.M."/>
            <person name="James K.D."/>
            <person name="De Zoysa A."/>
            <person name="Chillingworth T."/>
            <person name="Cronin A."/>
            <person name="Dowd L."/>
            <person name="Feltwell T."/>
            <person name="Hamlin N."/>
            <person name="Holroyd S."/>
            <person name="Jagels K."/>
            <person name="Moule S."/>
            <person name="Quail M.A."/>
            <person name="Rabbinowitsch E."/>
            <person name="Rutherford K.M."/>
            <person name="Thomson N.R."/>
            <person name="Unwin L."/>
            <person name="Whitehead S."/>
            <person name="Barrell B.G."/>
            <person name="Parkhill J."/>
        </authorList>
    </citation>
    <scope>NUCLEOTIDE SEQUENCE [LARGE SCALE GENOMIC DNA]</scope>
    <source>
        <strain>ATCC 700971 / NCTC 13129 / Biotype gravis</strain>
    </source>
</reference>
<comment type="catalytic activity">
    <reaction evidence="1">
        <text>5-amino-1-(5-phospho-D-ribosyl)imidazole-4-carboxylate + L-aspartate + ATP = (2S)-2-[5-amino-1-(5-phospho-beta-D-ribosyl)imidazole-4-carboxamido]succinate + ADP + phosphate + 2 H(+)</text>
        <dbReference type="Rhea" id="RHEA:22628"/>
        <dbReference type="ChEBI" id="CHEBI:15378"/>
        <dbReference type="ChEBI" id="CHEBI:29991"/>
        <dbReference type="ChEBI" id="CHEBI:30616"/>
        <dbReference type="ChEBI" id="CHEBI:43474"/>
        <dbReference type="ChEBI" id="CHEBI:58443"/>
        <dbReference type="ChEBI" id="CHEBI:77657"/>
        <dbReference type="ChEBI" id="CHEBI:456216"/>
        <dbReference type="EC" id="6.3.2.6"/>
    </reaction>
</comment>
<comment type="pathway">
    <text evidence="1">Purine metabolism; IMP biosynthesis via de novo pathway; 5-amino-1-(5-phospho-D-ribosyl)imidazole-4-carboxamide from 5-amino-1-(5-phospho-D-ribosyl)imidazole-4-carboxylate: step 1/2.</text>
</comment>
<comment type="similarity">
    <text evidence="1">Belongs to the SAICAR synthetase family.</text>
</comment>
<accession>Q6NFG4</accession>
<proteinExistence type="inferred from homology"/>
<gene>
    <name evidence="1" type="primary">purC</name>
    <name type="ordered locus">DIP1927</name>
</gene>
<sequence length="297" mass="33170">MRPELSQYTHVSAGKVREIYEVDDERLLMVVSDRISAYDHILEPEIPDKGRVLTAMSMYFFHNIDFPNHLAGPIDDPAIPEEVLGRAMVCKKLKMLPFECVARGYLTGSGLKEYQETGTVCGVELPEGLVEASKLPEPIFTPATKAELGDHDENVSFDVVVEKLGEARANELRDATLRIYSEAAALAEERGIILADTKFEFGLDEDGRLVLADEVLTPDSSRYWPADGYEEGKVQPSFDKQYVRNWLTGPKSGWSTDDVTPPPSLPGSVVEATRERYVEAFERITGKKFCEWIGCCV</sequence>
<feature type="chain" id="PRO_1000018694" description="Phosphoribosylaminoimidazole-succinocarboxamide synthase">
    <location>
        <begin position="1"/>
        <end position="297"/>
    </location>
</feature>